<proteinExistence type="inferred from homology"/>
<evidence type="ECO:0000250" key="1"/>
<evidence type="ECO:0000255" key="2">
    <source>
        <dbReference type="PROSITE-ProRule" id="PRU01047"/>
    </source>
</evidence>
<evidence type="ECO:0000256" key="3">
    <source>
        <dbReference type="SAM" id="MobiDB-lite"/>
    </source>
</evidence>
<organism>
    <name type="scientific">Encephalitozoon cuniculi (strain GB-M1)</name>
    <name type="common">Microsporidian parasite</name>
    <dbReference type="NCBI Taxonomy" id="284813"/>
    <lineage>
        <taxon>Eukaryota</taxon>
        <taxon>Fungi</taxon>
        <taxon>Fungi incertae sedis</taxon>
        <taxon>Microsporidia</taxon>
        <taxon>Unikaryonidae</taxon>
        <taxon>Encephalitozoon</taxon>
    </lineage>
</organism>
<comment type="function">
    <text evidence="1">Involved in the biogenesis of the 60S ribosomal subunit.</text>
</comment>
<comment type="subcellular location">
    <subcellularLocation>
        <location evidence="1">Nucleus</location>
        <location evidence="1">Nucleolus</location>
    </subcellularLocation>
</comment>
<comment type="similarity">
    <text evidence="2">Belongs to the TRAFAC class OBG-HflX-like GTPase superfamily. OBG GTPase family. NOG subfamily.</text>
</comment>
<sequence length="528" mass="61339">MKANFGYITPVPLNMELIDISLSKTQKRTPTVIHPQYNIVKIRMFYMRKVKHAGNEFASRLGTILTDFPRIEDIHPFYGDLINVLYDRDHYKLALGHVNAAKNGIEKVSKEFVKLLKFADSLYRCKQLKRAALGRMASAAKKLGKTLEYLEEVRMHMSRLPSIDLSGRTLLVCGFPNVGKSSFVRKISRADVEVQPYPFTTKSLYVGHFDYKYLQWQVIDTPGILDQPLENRNTIEMLSITALAHIKAVVLYFIDLSETCGYSVEEQMDLFNTLNPLLSSNMVIVLSKSDVLGLSGMEDKKAIMSFLEGKKYMEMSCEKEENIDAVKAMACDLLLDERFERKINSERLSEYINRITIVRPKELREKAESFICSREVTEIENEQERYLIPEEYRYDIVPEIVDGKNVADFFDPDIEKKLKEVEEEEEGLLPMYCKTYDVLSPEERALKEEVVAGIERRRIINRLREKKRLPDSWKHRSRNSGGDIAVHVRRDSKTQVAQPPRLPSKKKARFDDKHYYDRKPKHLYRGRK</sequence>
<gene>
    <name type="primary">NOG1</name>
    <name type="ordered locus">ECU05_0800</name>
</gene>
<protein>
    <recommendedName>
        <fullName>Nucleolar GTP-binding protein 1</fullName>
    </recommendedName>
</protein>
<name>NOG1_ENCCU</name>
<reference key="1">
    <citation type="journal article" date="2001" name="Nature">
        <title>Genome sequence and gene compaction of the eukaryote parasite Encephalitozoon cuniculi.</title>
        <authorList>
            <person name="Katinka M.D."/>
            <person name="Duprat S."/>
            <person name="Cornillot E."/>
            <person name="Metenier G."/>
            <person name="Thomarat F."/>
            <person name="Prensier G."/>
            <person name="Barbe V."/>
            <person name="Peyretaillade E."/>
            <person name="Brottier P."/>
            <person name="Wincker P."/>
            <person name="Delbac F."/>
            <person name="El Alaoui H."/>
            <person name="Peyret P."/>
            <person name="Saurin W."/>
            <person name="Gouy M."/>
            <person name="Weissenbach J."/>
            <person name="Vivares C.P."/>
        </authorList>
    </citation>
    <scope>NUCLEOTIDE SEQUENCE [LARGE SCALE GENOMIC DNA]</scope>
    <source>
        <strain>GB-M1</strain>
    </source>
</reference>
<keyword id="KW-0342">GTP-binding</keyword>
<keyword id="KW-0547">Nucleotide-binding</keyword>
<keyword id="KW-0539">Nucleus</keyword>
<keyword id="KW-1185">Reference proteome</keyword>
<keyword id="KW-0690">Ribosome biogenesis</keyword>
<feature type="chain" id="PRO_0000195032" description="Nucleolar GTP-binding protein 1">
    <location>
        <begin position="1"/>
        <end position="528"/>
    </location>
</feature>
<feature type="domain" description="OBG-type G" evidence="2">
    <location>
        <begin position="168"/>
        <end position="335"/>
    </location>
</feature>
<feature type="region of interest" description="Disordered" evidence="3">
    <location>
        <begin position="470"/>
        <end position="528"/>
    </location>
</feature>
<feature type="compositionally biased region" description="Basic and acidic residues" evidence="3">
    <location>
        <begin position="509"/>
        <end position="518"/>
    </location>
</feature>
<feature type="compositionally biased region" description="Basic residues" evidence="3">
    <location>
        <begin position="519"/>
        <end position="528"/>
    </location>
</feature>
<feature type="binding site" evidence="2">
    <location>
        <begin position="174"/>
        <end position="181"/>
    </location>
    <ligand>
        <name>GTP</name>
        <dbReference type="ChEBI" id="CHEBI:37565"/>
    </ligand>
</feature>
<feature type="binding site" evidence="2">
    <location>
        <begin position="220"/>
        <end position="224"/>
    </location>
    <ligand>
        <name>GTP</name>
        <dbReference type="ChEBI" id="CHEBI:37565"/>
    </ligand>
</feature>
<feature type="binding site" evidence="2">
    <location>
        <begin position="287"/>
        <end position="290"/>
    </location>
    <ligand>
        <name>GTP</name>
        <dbReference type="ChEBI" id="CHEBI:37565"/>
    </ligand>
</feature>
<dbReference type="EMBL" id="AL590445">
    <property type="protein sequence ID" value="CAD26599.1"/>
    <property type="molecule type" value="Genomic_DNA"/>
</dbReference>
<dbReference type="RefSeq" id="NP_597422.1">
    <property type="nucleotide sequence ID" value="NM_001041288.1"/>
</dbReference>
<dbReference type="SMR" id="Q8SVJ8"/>
<dbReference type="FunCoup" id="Q8SVJ8">
    <property type="interactions" value="298"/>
</dbReference>
<dbReference type="STRING" id="284813.Q8SVJ8"/>
<dbReference type="GeneID" id="859087"/>
<dbReference type="KEGG" id="ecu:ECU05_0800"/>
<dbReference type="VEuPathDB" id="MicrosporidiaDB:ECU05_0800"/>
<dbReference type="HOGENOM" id="CLU_011784_5_1_1"/>
<dbReference type="InParanoid" id="Q8SVJ8"/>
<dbReference type="OMA" id="ILEHDEW"/>
<dbReference type="OrthoDB" id="415015at2759"/>
<dbReference type="Proteomes" id="UP000000819">
    <property type="component" value="Chromosome V"/>
</dbReference>
<dbReference type="GO" id="GO:0005730">
    <property type="term" value="C:nucleolus"/>
    <property type="evidence" value="ECO:0007669"/>
    <property type="project" value="UniProtKB-SubCell"/>
</dbReference>
<dbReference type="GO" id="GO:0005525">
    <property type="term" value="F:GTP binding"/>
    <property type="evidence" value="ECO:0007669"/>
    <property type="project" value="UniProtKB-KW"/>
</dbReference>
<dbReference type="GO" id="GO:0042254">
    <property type="term" value="P:ribosome biogenesis"/>
    <property type="evidence" value="ECO:0007669"/>
    <property type="project" value="UniProtKB-KW"/>
</dbReference>
<dbReference type="CDD" id="cd01897">
    <property type="entry name" value="NOG"/>
    <property type="match status" value="1"/>
</dbReference>
<dbReference type="Gene3D" id="1.20.120.1190">
    <property type="match status" value="1"/>
</dbReference>
<dbReference type="Gene3D" id="3.40.50.300">
    <property type="entry name" value="P-loop containing nucleotide triphosphate hydrolases"/>
    <property type="match status" value="1"/>
</dbReference>
<dbReference type="InterPro" id="IPR031167">
    <property type="entry name" value="G_OBG"/>
</dbReference>
<dbReference type="InterPro" id="IPR006073">
    <property type="entry name" value="GTP-bd"/>
</dbReference>
<dbReference type="InterPro" id="IPR041623">
    <property type="entry name" value="NOG1_N"/>
</dbReference>
<dbReference type="InterPro" id="IPR010674">
    <property type="entry name" value="NOG1_Rossman_fold_dom"/>
</dbReference>
<dbReference type="InterPro" id="IPR012973">
    <property type="entry name" value="NOG_C"/>
</dbReference>
<dbReference type="InterPro" id="IPR027417">
    <property type="entry name" value="P-loop_NTPase"/>
</dbReference>
<dbReference type="PANTHER" id="PTHR45759">
    <property type="entry name" value="NUCLEOLAR GTP-BINDING PROTEIN 1"/>
    <property type="match status" value="1"/>
</dbReference>
<dbReference type="Pfam" id="PF06858">
    <property type="entry name" value="NOG1"/>
    <property type="match status" value="1"/>
</dbReference>
<dbReference type="Pfam" id="PF17835">
    <property type="entry name" value="NOG1_N"/>
    <property type="match status" value="1"/>
</dbReference>
<dbReference type="Pfam" id="PF08155">
    <property type="entry name" value="NOGCT"/>
    <property type="match status" value="1"/>
</dbReference>
<dbReference type="PRINTS" id="PR00326">
    <property type="entry name" value="GTP1OBG"/>
</dbReference>
<dbReference type="SUPFAM" id="SSF52540">
    <property type="entry name" value="P-loop containing nucleoside triphosphate hydrolases"/>
    <property type="match status" value="1"/>
</dbReference>
<dbReference type="PROSITE" id="PS51710">
    <property type="entry name" value="G_OBG"/>
    <property type="match status" value="1"/>
</dbReference>
<accession>Q8SVJ8</accession>